<gene>
    <name evidence="1" type="primary">atpG</name>
    <name type="ordered locus">MG400</name>
</gene>
<evidence type="ECO:0000255" key="1">
    <source>
        <dbReference type="HAMAP-Rule" id="MF_00815"/>
    </source>
</evidence>
<evidence type="ECO:0000305" key="2"/>
<name>ATPG_MYCGE</name>
<keyword id="KW-0066">ATP synthesis</keyword>
<keyword id="KW-1003">Cell membrane</keyword>
<keyword id="KW-0139">CF(1)</keyword>
<keyword id="KW-0375">Hydrogen ion transport</keyword>
<keyword id="KW-0406">Ion transport</keyword>
<keyword id="KW-0472">Membrane</keyword>
<keyword id="KW-1185">Reference proteome</keyword>
<keyword id="KW-0813">Transport</keyword>
<comment type="function">
    <text evidence="1">Produces ATP from ADP in the presence of a proton gradient across the membrane. The gamma chain is believed to be important in regulating ATPase activity and the flow of protons through the CF(0) complex.</text>
</comment>
<comment type="subunit">
    <text evidence="1">F-type ATPases have 2 components, CF(1) - the catalytic core - and CF(0) - the membrane proton channel. CF(1) has five subunits: alpha(3), beta(3), gamma(1), delta(1), epsilon(1). CF(0) has three main subunits: a, b and c.</text>
</comment>
<comment type="subcellular location">
    <subcellularLocation>
        <location evidence="1">Cell membrane</location>
        <topology evidence="1">Peripheral membrane protein</topology>
    </subcellularLocation>
</comment>
<comment type="similarity">
    <text evidence="1">Belongs to the ATPase gamma chain family.</text>
</comment>
<organism>
    <name type="scientific">Mycoplasma genitalium (strain ATCC 33530 / DSM 19775 / NCTC 10195 / G37)</name>
    <name type="common">Mycoplasmoides genitalium</name>
    <dbReference type="NCBI Taxonomy" id="243273"/>
    <lineage>
        <taxon>Bacteria</taxon>
        <taxon>Bacillati</taxon>
        <taxon>Mycoplasmatota</taxon>
        <taxon>Mycoplasmoidales</taxon>
        <taxon>Mycoplasmoidaceae</taxon>
        <taxon>Mycoplasmoides</taxon>
    </lineage>
</organism>
<feature type="chain" id="PRO_0000073320" description="ATP synthase gamma chain">
    <location>
        <begin position="1"/>
        <end position="279"/>
    </location>
</feature>
<feature type="sequence conflict" description="In Ref. 2; AAB01015." evidence="2" ref="2">
    <original>QVVV</original>
    <variation>PSSC</variation>
    <location>
        <begin position="55"/>
        <end position="58"/>
    </location>
</feature>
<feature type="sequence conflict" description="In Ref. 2; AAB01015." evidence="2" ref="2">
    <original>DVALYGGLVET</original>
    <variation>WCGSVWWPCWN</variation>
    <location>
        <begin position="219"/>
        <end position="229"/>
    </location>
</feature>
<sequence length="279" mass="32422">MAFIQEIKRRMNTVKSTIKITNAMKMVSRAKFIKFKKQFQEISLFFNEFYKAVGQVVVSLKEPKKKPDNQKTLWIMMSSSLGLCGQHNSNMNKLLKANFKADDKIFFLGRKNQSFWNKNSQYNPAVGFIDIQDRDINFDYCQTIFDQIMDAFKEFKLDRICMVYTKFKNSLIQQSQLFQVFPFDVETFKTLNPVVTDQQLDFEPDQATIINLITPQFFDVALYGGLVETKLCESASRQNAMEAATKNAKDLLDKYTLQFNKLRQNSITEEIIEVIGGMN</sequence>
<accession>P47640</accession>
<accession>Q49511</accession>
<reference key="1">
    <citation type="journal article" date="1995" name="Science">
        <title>The minimal gene complement of Mycoplasma genitalium.</title>
        <authorList>
            <person name="Fraser C.M."/>
            <person name="Gocayne J.D."/>
            <person name="White O."/>
            <person name="Adams M.D."/>
            <person name="Clayton R.A."/>
            <person name="Fleischmann R.D."/>
            <person name="Bult C.J."/>
            <person name="Kerlavage A.R."/>
            <person name="Sutton G.G."/>
            <person name="Kelley J.M."/>
            <person name="Fritchman J.L."/>
            <person name="Weidman J.F."/>
            <person name="Small K.V."/>
            <person name="Sandusky M."/>
            <person name="Fuhrmann J.L."/>
            <person name="Nguyen D.T."/>
            <person name="Utterback T.R."/>
            <person name="Saudek D.M."/>
            <person name="Phillips C.A."/>
            <person name="Merrick J.M."/>
            <person name="Tomb J.-F."/>
            <person name="Dougherty B.A."/>
            <person name="Bott K.F."/>
            <person name="Hu P.-C."/>
            <person name="Lucier T.S."/>
            <person name="Peterson S.N."/>
            <person name="Smith H.O."/>
            <person name="Hutchison C.A. III"/>
            <person name="Venter J.C."/>
        </authorList>
    </citation>
    <scope>NUCLEOTIDE SEQUENCE [LARGE SCALE GENOMIC DNA]</scope>
    <source>
        <strain>ATCC 33530 / DSM 19775 / NCTC 10195 / G37</strain>
    </source>
</reference>
<reference key="2">
    <citation type="journal article" date="1993" name="J. Bacteriol.">
        <title>A survey of the Mycoplasma genitalium genome by using random sequencing.</title>
        <authorList>
            <person name="Peterson S.N."/>
            <person name="Hu P.-C."/>
            <person name="Bott K.F."/>
            <person name="Hutchison C.A. III"/>
        </authorList>
    </citation>
    <scope>NUCLEOTIDE SEQUENCE [GENOMIC DNA] OF 55-229</scope>
    <source>
        <strain>ATCC 33530 / DSM 19775 / NCTC 10195 / G37</strain>
    </source>
</reference>
<proteinExistence type="inferred from homology"/>
<protein>
    <recommendedName>
        <fullName evidence="1">ATP synthase gamma chain</fullName>
    </recommendedName>
    <alternativeName>
        <fullName evidence="1">ATP synthase F1 sector gamma subunit</fullName>
    </alternativeName>
    <alternativeName>
        <fullName evidence="1">F-ATPase gamma subunit</fullName>
    </alternativeName>
</protein>
<dbReference type="EMBL" id="L43967">
    <property type="protein sequence ID" value="AAC71628.1"/>
    <property type="molecule type" value="Genomic_DNA"/>
</dbReference>
<dbReference type="EMBL" id="U01703">
    <property type="protein sequence ID" value="AAB01015.1"/>
    <property type="molecule type" value="Genomic_DNA"/>
</dbReference>
<dbReference type="PIR" id="C64244">
    <property type="entry name" value="C64244"/>
</dbReference>
<dbReference type="RefSeq" id="WP_009885623.1">
    <property type="nucleotide sequence ID" value="NC_000908.2"/>
</dbReference>
<dbReference type="SMR" id="P47640"/>
<dbReference type="FunCoup" id="P47640">
    <property type="interactions" value="191"/>
</dbReference>
<dbReference type="STRING" id="243273.MG_400"/>
<dbReference type="GeneID" id="88282586"/>
<dbReference type="KEGG" id="mge:MG_400"/>
<dbReference type="eggNOG" id="COG0224">
    <property type="taxonomic scope" value="Bacteria"/>
</dbReference>
<dbReference type="HOGENOM" id="CLU_050669_0_1_14"/>
<dbReference type="InParanoid" id="P47640"/>
<dbReference type="OrthoDB" id="9812769at2"/>
<dbReference type="BioCyc" id="MGEN243273:G1GJ2-497-MONOMER"/>
<dbReference type="Proteomes" id="UP000000807">
    <property type="component" value="Chromosome"/>
</dbReference>
<dbReference type="GO" id="GO:0005886">
    <property type="term" value="C:plasma membrane"/>
    <property type="evidence" value="ECO:0007669"/>
    <property type="project" value="UniProtKB-SubCell"/>
</dbReference>
<dbReference type="GO" id="GO:0045259">
    <property type="term" value="C:proton-transporting ATP synthase complex"/>
    <property type="evidence" value="ECO:0007669"/>
    <property type="project" value="UniProtKB-KW"/>
</dbReference>
<dbReference type="GO" id="GO:0005524">
    <property type="term" value="F:ATP binding"/>
    <property type="evidence" value="ECO:0007669"/>
    <property type="project" value="UniProtKB-UniRule"/>
</dbReference>
<dbReference type="GO" id="GO:0046933">
    <property type="term" value="F:proton-transporting ATP synthase activity, rotational mechanism"/>
    <property type="evidence" value="ECO:0007669"/>
    <property type="project" value="UniProtKB-UniRule"/>
</dbReference>
<dbReference type="GO" id="GO:0015986">
    <property type="term" value="P:proton motive force-driven ATP synthesis"/>
    <property type="evidence" value="ECO:0000318"/>
    <property type="project" value="GO_Central"/>
</dbReference>
<dbReference type="GO" id="GO:0042777">
    <property type="term" value="P:proton motive force-driven plasma membrane ATP synthesis"/>
    <property type="evidence" value="ECO:0007669"/>
    <property type="project" value="UniProtKB-UniRule"/>
</dbReference>
<dbReference type="CDD" id="cd12151">
    <property type="entry name" value="F1-ATPase_gamma"/>
    <property type="match status" value="1"/>
</dbReference>
<dbReference type="Gene3D" id="3.40.1380.10">
    <property type="match status" value="1"/>
</dbReference>
<dbReference type="Gene3D" id="1.10.287.80">
    <property type="entry name" value="ATP synthase, gamma subunit, helix hairpin domain"/>
    <property type="match status" value="1"/>
</dbReference>
<dbReference type="HAMAP" id="MF_00815">
    <property type="entry name" value="ATP_synth_gamma_bact"/>
    <property type="match status" value="1"/>
</dbReference>
<dbReference type="InterPro" id="IPR035968">
    <property type="entry name" value="ATP_synth_F1_ATPase_gsu"/>
</dbReference>
<dbReference type="InterPro" id="IPR000131">
    <property type="entry name" value="ATP_synth_F1_gsu"/>
</dbReference>
<dbReference type="NCBIfam" id="TIGR01146">
    <property type="entry name" value="ATPsyn_F1gamma"/>
    <property type="match status" value="1"/>
</dbReference>
<dbReference type="PANTHER" id="PTHR11693">
    <property type="entry name" value="ATP SYNTHASE GAMMA CHAIN"/>
    <property type="match status" value="1"/>
</dbReference>
<dbReference type="PANTHER" id="PTHR11693:SF22">
    <property type="entry name" value="ATP SYNTHASE SUBUNIT GAMMA, MITOCHONDRIAL"/>
    <property type="match status" value="1"/>
</dbReference>
<dbReference type="Pfam" id="PF00231">
    <property type="entry name" value="ATP-synt"/>
    <property type="match status" value="1"/>
</dbReference>
<dbReference type="PRINTS" id="PR00126">
    <property type="entry name" value="ATPASEGAMMA"/>
</dbReference>
<dbReference type="SUPFAM" id="SSF52943">
    <property type="entry name" value="ATP synthase (F1-ATPase), gamma subunit"/>
    <property type="match status" value="1"/>
</dbReference>